<feature type="chain" id="PRO_0000299506" description="WD repeat and coiled-coil-containing protein">
    <location>
        <begin position="1"/>
        <end position="726"/>
    </location>
</feature>
<feature type="repeat" description="WD 1">
    <location>
        <begin position="55"/>
        <end position="98"/>
    </location>
</feature>
<feature type="repeat" description="WD 2">
    <location>
        <begin position="154"/>
        <end position="194"/>
    </location>
</feature>
<feature type="region of interest" description="Disordered" evidence="2">
    <location>
        <begin position="503"/>
        <end position="571"/>
    </location>
</feature>
<feature type="coiled-coil region" evidence="1">
    <location>
        <begin position="581"/>
        <end position="609"/>
    </location>
</feature>
<feature type="compositionally biased region" description="Polar residues" evidence="2">
    <location>
        <begin position="506"/>
        <end position="515"/>
    </location>
</feature>
<feature type="compositionally biased region" description="Basic and acidic residues" evidence="2">
    <location>
        <begin position="517"/>
        <end position="535"/>
    </location>
</feature>
<feature type="compositionally biased region" description="Polar residues" evidence="2">
    <location>
        <begin position="550"/>
        <end position="565"/>
    </location>
</feature>
<sequence length="726" mass="79701">MELGKGKLLRSGLNALYQAIHPVHGLAWTDGRQVVLTALHHNNEEPKFGNSIVVGQFEHVHGLYWGPFLGNDTPALLAVQHKKHVTVWQLCYSSLDKNKLVVSQTCEIGDPFPVLPQGCTWHPSKDILVVLTKRDVSVLYAVRYENTSIKADVKSSGLIHCACWTKDGSRLVVAIGSALHSYIWDSKQKSLNACAFCPVFDIGGYICAIESTVDSQVAVSTELPLDRICALNAGIAFDVPASSEITISSQPGLLLMEEEFSMDVVQKSADSGSLTTDSLATSPATLDLTHIVNHSKADLNSLLNMKKKDYLTGSGQDSSHLILVNFEKKVTTTRRVSIPGILVPDILAFDPTAHIVAVASNTCSAVLVYSLTSSSVPNIQQILLEKNERPKGLCFLTDKMLLVLVGRQKTSDPAFLPSSSSDKYLIRLMVKEVMFDEDSSASSGGNTSVQASFDSSMSIQDKKKLVESLYKEGQSAHREILLPGGVAPPTYLRKKKLIEEIRSYDGDQSPTSSANEFDDKRSKLRVESLDTEPKNRSITLGLDMDKKPNSRPTSPKSECQKSSPPNFIKHGEMSPQQEILSISRNVERLCCNFAHLQQHLSELTDITRNGKRPLSASYLPCRQAPYVTVVCQDAYHPEGPAMKRSILLCDNKLRLGTIQELFGLSLIEMQLGPSLWIILTGDSEGFIPLTFLANQEITIRDARISTTHPPLSMDRNNSLQPSSSVT</sequence>
<proteinExistence type="evidence at transcript level"/>
<organism>
    <name type="scientific">Xenopus tropicalis</name>
    <name type="common">Western clawed frog</name>
    <name type="synonym">Silurana tropicalis</name>
    <dbReference type="NCBI Taxonomy" id="8364"/>
    <lineage>
        <taxon>Eukaryota</taxon>
        <taxon>Metazoa</taxon>
        <taxon>Chordata</taxon>
        <taxon>Craniata</taxon>
        <taxon>Vertebrata</taxon>
        <taxon>Euteleostomi</taxon>
        <taxon>Amphibia</taxon>
        <taxon>Batrachia</taxon>
        <taxon>Anura</taxon>
        <taxon>Pipoidea</taxon>
        <taxon>Pipidae</taxon>
        <taxon>Xenopodinae</taxon>
        <taxon>Xenopus</taxon>
        <taxon>Silurana</taxon>
    </lineage>
</organism>
<name>WDCP_XENTR</name>
<dbReference type="EMBL" id="BC123996">
    <property type="protein sequence ID" value="AAI23997.1"/>
    <property type="molecule type" value="mRNA"/>
</dbReference>
<dbReference type="RefSeq" id="NP_001072871.1">
    <property type="nucleotide sequence ID" value="NM_001079403.1"/>
</dbReference>
<dbReference type="FunCoup" id="Q08D12">
    <property type="interactions" value="1285"/>
</dbReference>
<dbReference type="PaxDb" id="8364-ENSXETP00000039479"/>
<dbReference type="DNASU" id="780332"/>
<dbReference type="GeneID" id="780332"/>
<dbReference type="KEGG" id="xtr:780332"/>
<dbReference type="AGR" id="Xenbase:XB-GENE-5729803"/>
<dbReference type="CTD" id="80304"/>
<dbReference type="Xenbase" id="XB-GENE-5729803">
    <property type="gene designation" value="wdcp"/>
</dbReference>
<dbReference type="eggNOG" id="ENOG502QUUX">
    <property type="taxonomic scope" value="Eukaryota"/>
</dbReference>
<dbReference type="InParanoid" id="Q08D12"/>
<dbReference type="OMA" id="DISEPYP"/>
<dbReference type="OrthoDB" id="6409262at2759"/>
<dbReference type="Proteomes" id="UP000008143">
    <property type="component" value="Chromosome 5"/>
</dbReference>
<dbReference type="InterPro" id="IPR028041">
    <property type="entry name" value="WDCP"/>
</dbReference>
<dbReference type="PANTHER" id="PTHR14897">
    <property type="entry name" value="WD REPEAT AND COILED-COIL-CONTAINING PROTEIN"/>
    <property type="match status" value="1"/>
</dbReference>
<dbReference type="PANTHER" id="PTHR14897:SF12">
    <property type="entry name" value="WD REPEAT AND COILED-COIL-CONTAINING PROTEIN"/>
    <property type="match status" value="1"/>
</dbReference>
<dbReference type="Pfam" id="PF15390">
    <property type="entry name" value="WDCP"/>
    <property type="match status" value="1"/>
</dbReference>
<dbReference type="SUPFAM" id="SSF75011">
    <property type="entry name" value="3-carboxy-cis,cis-mucoante lactonizing enzyme"/>
    <property type="match status" value="1"/>
</dbReference>
<protein>
    <recommendedName>
        <fullName evidence="3">WD repeat and coiled-coil-containing protein</fullName>
    </recommendedName>
</protein>
<accession>Q08D12</accession>
<reference key="1">
    <citation type="submission" date="2006-09" db="EMBL/GenBank/DDBJ databases">
        <authorList>
            <consortium name="NIH - Xenopus Gene Collection (XGC) project"/>
        </authorList>
    </citation>
    <scope>NUCLEOTIDE SEQUENCE [LARGE SCALE MRNA]</scope>
    <source>
        <strain>N6</strain>
        <tissue>Oviduct</tissue>
    </source>
</reference>
<keyword id="KW-0175">Coiled coil</keyword>
<keyword id="KW-1185">Reference proteome</keyword>
<keyword id="KW-0677">Repeat</keyword>
<keyword id="KW-0853">WD repeat</keyword>
<gene>
    <name type="primary">wdcp</name>
</gene>
<evidence type="ECO:0000255" key="1"/>
<evidence type="ECO:0000256" key="2">
    <source>
        <dbReference type="SAM" id="MobiDB-lite"/>
    </source>
</evidence>
<evidence type="ECO:0000305" key="3"/>